<feature type="signal peptide" evidence="3">
    <location>
        <begin position="1"/>
        <end position="20"/>
    </location>
</feature>
<feature type="propeptide" id="PRO_0000440158" evidence="7">
    <location>
        <begin position="21"/>
        <end position="47"/>
    </location>
</feature>
<feature type="chain" id="PRO_5001582535" description="DELTA-miturgitoxin-Cp2a" evidence="7">
    <location>
        <begin position="48"/>
        <end position="178"/>
    </location>
</feature>
<feature type="short sequence motif" description="Processing quadruplet motif" evidence="5">
    <location>
        <begin position="44"/>
        <end position="47"/>
    </location>
</feature>
<feature type="modified residue" description="Valine amide" evidence="4">
    <location>
        <position position="178"/>
    </location>
</feature>
<feature type="disulfide bond" evidence="2">
    <location>
        <begin position="51"/>
        <end position="66"/>
    </location>
</feature>
<feature type="disulfide bond" evidence="2">
    <location>
        <begin position="58"/>
        <end position="75"/>
    </location>
</feature>
<feature type="disulfide bond" evidence="2">
    <location>
        <begin position="65"/>
        <end position="88"/>
    </location>
</feature>
<feature type="disulfide bond" evidence="2">
    <location>
        <begin position="77"/>
        <end position="86"/>
    </location>
</feature>
<feature type="disulfide bond" evidence="2">
    <location>
        <begin position="115"/>
        <end position="130"/>
    </location>
</feature>
<feature type="disulfide bond" evidence="2">
    <location>
        <begin position="122"/>
        <end position="139"/>
    </location>
</feature>
<feature type="disulfide bond" evidence="2">
    <location>
        <begin position="129"/>
        <end position="158"/>
    </location>
</feature>
<feature type="disulfide bond" evidence="2">
    <location>
        <begin position="141"/>
        <end position="156"/>
    </location>
</feature>
<evidence type="ECO:0000250" key="1">
    <source>
        <dbReference type="UniProtKB" id="C0HKG7"/>
    </source>
</evidence>
<evidence type="ECO:0000250" key="2">
    <source>
        <dbReference type="UniProtKB" id="P58604"/>
    </source>
</evidence>
<evidence type="ECO:0000255" key="3"/>
<evidence type="ECO:0000269" key="4">
    <source>
    </source>
</evidence>
<evidence type="ECO:0000303" key="5">
    <source>
    </source>
</evidence>
<evidence type="ECO:0000305" key="6"/>
<evidence type="ECO:0000305" key="7">
    <source>
    </source>
</evidence>
<evidence type="ECO:0000312" key="8">
    <source>
        <dbReference type="EMBL" id="AHH30791.1"/>
    </source>
</evidence>
<sequence>MKFSLFFGVLFLAILHSCLSESEKDLTDEDHFRSSDSFLSEIQEESRGKKCIERNKECTNDRHGCCRGKIFKDKCECVGSGGKERCVCKQKKWAKIIESYIGDIPTLPKPEDDKCVPKHEDCSERKNDCCKSGLFTLKCKCYDMQDDEDGKKTELCGCVQPFEHKAIEQALRFGKWMVG</sequence>
<keyword id="KW-0027">Amidation</keyword>
<keyword id="KW-0903">Direct protein sequencing</keyword>
<keyword id="KW-1015">Disulfide bond</keyword>
<keyword id="KW-0960">Knottin</keyword>
<keyword id="KW-0964">Secreted</keyword>
<keyword id="KW-0732">Signal</keyword>
<keyword id="KW-0800">Toxin</keyword>
<comment type="function">
    <text evidence="1 4">Spider venom toxin that exhibits cytolytic activity by forming an alpha-helix across the membrane (By similarity). Lethal to insect larvae (PubMed:24717175).</text>
</comment>
<comment type="subcellular location">
    <subcellularLocation>
        <location evidence="4">Secreted</location>
    </subcellularLocation>
</comment>
<comment type="tissue specificity">
    <text evidence="4">Expressed by the venom gland.</text>
</comment>
<comment type="domain">
    <text evidence="6">The presence of 'disulfide through disulfide knots' structurally defines this protein as a knottin. This toxin contains 2 'disulfide through disulfide knots'.</text>
</comment>
<comment type="PTM">
    <text evidence="5">Cleavage of the propeptide depends on the processing quadruplet motif (XXXR, with at least one of X being E).</text>
</comment>
<comment type="mass spectrometry"/>
<comment type="toxic dose">
    <text evidence="4">LD(50) is &gt;50 ug/g in S.carnaria larvae.</text>
</comment>
<comment type="toxic dose">
    <text evidence="4">PD(50) is 33-50 ug/g in S.carnaria larvae.</text>
</comment>
<comment type="similarity">
    <text evidence="3">Belongs to the spider toxin CSTX family. Double-CSTX subfamily.</text>
</comment>
<protein>
    <recommendedName>
        <fullName evidence="6">DELTA-miturgitoxin-Cp2a</fullName>
        <shortName evidence="6">DELTA-MGTX-Cp2a</shortName>
    </recommendedName>
    <alternativeName>
        <fullName evidence="5">Toxin CpTx-2a</fullName>
    </alternativeName>
    <alternativeName>
        <fullName evidence="6">Toxin CpTx1-2a</fullName>
    </alternativeName>
</protein>
<organism evidence="8">
    <name type="scientific">Cheiracanthium punctorium</name>
    <name type="common">Yellow sac spider</name>
    <name type="synonym">Aranea punctoria</name>
    <dbReference type="NCBI Taxonomy" id="682790"/>
    <lineage>
        <taxon>Eukaryota</taxon>
        <taxon>Metazoa</taxon>
        <taxon>Ecdysozoa</taxon>
        <taxon>Arthropoda</taxon>
        <taxon>Chelicerata</taxon>
        <taxon>Arachnida</taxon>
        <taxon>Araneae</taxon>
        <taxon>Araneomorphae</taxon>
        <taxon>Entelegynae</taxon>
        <taxon>Entelegynae incertae sedis</taxon>
        <taxon>Cheiracanthiidae</taxon>
        <taxon>Cheiracanthium</taxon>
    </lineage>
</organism>
<reference evidence="6" key="1">
    <citation type="journal article" date="2014" name="Insect Mol. Biol.">
        <title>Structure of the yellow sac spider Cheiracanthium punctorium genes provides clues to evolution of insecticidal two-domain knottin toxins.</title>
        <authorList>
            <person name="Sachkova M.Y."/>
            <person name="Slavokhotova A.A."/>
            <person name="Grishin E.V."/>
            <person name="Vassilevski A.A."/>
        </authorList>
    </citation>
    <scope>NUCLEOTIDE SEQUENCE [MRNA]</scope>
    <scope>PROTEIN SEQUENCE OF 48-67</scope>
    <scope>FUNCTION</scope>
    <scope>SUBCELLULAR LOCATION</scope>
    <scope>TISSUE SPECIFICITY</scope>
    <scope>MASS SPECTROMETRY</scope>
    <scope>IDENTIFICATION BY MASS SPECTROMETRY</scope>
    <scope>PQM MOTIF</scope>
    <scope>TOXIC DOSE</scope>
    <scope>AMIDATION AT VAL-178</scope>
    <source>
        <tissue evidence="5">Venom</tissue>
        <tissue evidence="5">Venom gland</tissue>
    </source>
</reference>
<dbReference type="EMBL" id="KF155273">
    <property type="protein sequence ID" value="AHH30791.1"/>
    <property type="molecule type" value="mRNA"/>
</dbReference>
<dbReference type="SMR" id="A0A059T2H4"/>
<dbReference type="GO" id="GO:0005576">
    <property type="term" value="C:extracellular region"/>
    <property type="evidence" value="ECO:0007669"/>
    <property type="project" value="UniProtKB-SubCell"/>
</dbReference>
<dbReference type="GO" id="GO:0090729">
    <property type="term" value="F:toxin activity"/>
    <property type="evidence" value="ECO:0007669"/>
    <property type="project" value="UniProtKB-KW"/>
</dbReference>
<dbReference type="InterPro" id="IPR019553">
    <property type="entry name" value="Spider_toxin_CSTX_knottin"/>
</dbReference>
<dbReference type="InterPro" id="IPR011142">
    <property type="entry name" value="Spider_toxin_CSTX_Knottin_CS"/>
</dbReference>
<dbReference type="Pfam" id="PF10530">
    <property type="entry name" value="Toxin_35"/>
    <property type="match status" value="2"/>
</dbReference>
<dbReference type="PROSITE" id="PS60029">
    <property type="entry name" value="SPIDER_CSTX"/>
    <property type="match status" value="2"/>
</dbReference>
<accession>A0A059T2H4</accession>
<accession>C0HJD4</accession>
<name>TX2A_CHEPU</name>
<proteinExistence type="evidence at protein level"/>